<name>NOP10_THEGJ</name>
<gene>
    <name evidence="1" type="primary">nop10</name>
    <name type="ordered locus">TGAM_0810</name>
</gene>
<dbReference type="EMBL" id="CP001398">
    <property type="protein sequence ID" value="ACS33312.1"/>
    <property type="molecule type" value="Genomic_DNA"/>
</dbReference>
<dbReference type="RefSeq" id="WP_015858429.1">
    <property type="nucleotide sequence ID" value="NC_012804.1"/>
</dbReference>
<dbReference type="SMR" id="C5A500"/>
<dbReference type="STRING" id="593117.TGAM_0810"/>
<dbReference type="PaxDb" id="593117-TGAM_0810"/>
<dbReference type="GeneID" id="7988977"/>
<dbReference type="KEGG" id="tga:TGAM_0810"/>
<dbReference type="PATRIC" id="fig|593117.10.peg.807"/>
<dbReference type="eggNOG" id="arCOG00906">
    <property type="taxonomic scope" value="Archaea"/>
</dbReference>
<dbReference type="HOGENOM" id="CLU_196480_1_0_2"/>
<dbReference type="OrthoDB" id="7259at2157"/>
<dbReference type="Proteomes" id="UP000001488">
    <property type="component" value="Chromosome"/>
</dbReference>
<dbReference type="GO" id="GO:1990904">
    <property type="term" value="C:ribonucleoprotein complex"/>
    <property type="evidence" value="ECO:0007669"/>
    <property type="project" value="UniProtKB-KW"/>
</dbReference>
<dbReference type="GO" id="GO:0030515">
    <property type="term" value="F:snoRNA binding"/>
    <property type="evidence" value="ECO:0007669"/>
    <property type="project" value="InterPro"/>
</dbReference>
<dbReference type="GO" id="GO:0001522">
    <property type="term" value="P:pseudouridine synthesis"/>
    <property type="evidence" value="ECO:0007669"/>
    <property type="project" value="InterPro"/>
</dbReference>
<dbReference type="GO" id="GO:0006364">
    <property type="term" value="P:rRNA processing"/>
    <property type="evidence" value="ECO:0007669"/>
    <property type="project" value="UniProtKB-UniRule"/>
</dbReference>
<dbReference type="Gene3D" id="2.20.28.40">
    <property type="entry name" value="H/ACA ribonucleoprotein complex, subunit Nop10"/>
    <property type="match status" value="1"/>
</dbReference>
<dbReference type="HAMAP" id="MF_00803">
    <property type="entry name" value="Nop10"/>
    <property type="match status" value="1"/>
</dbReference>
<dbReference type="InterPro" id="IPR007264">
    <property type="entry name" value="H/ACA_rnp_Nop10"/>
</dbReference>
<dbReference type="InterPro" id="IPR036756">
    <property type="entry name" value="H/ACA_rnp_Nop10_sf"/>
</dbReference>
<dbReference type="InterPro" id="IPR023532">
    <property type="entry name" value="Nop10_arc-typ"/>
</dbReference>
<dbReference type="NCBIfam" id="NF009623">
    <property type="entry name" value="PRK13130.1"/>
    <property type="match status" value="1"/>
</dbReference>
<dbReference type="PANTHER" id="PTHR13305:SF0">
    <property type="entry name" value="H_ACA RIBONUCLEOPROTEIN COMPLEX SUBUNIT 3"/>
    <property type="match status" value="1"/>
</dbReference>
<dbReference type="PANTHER" id="PTHR13305">
    <property type="entry name" value="RIBOSOME BIOGENESIS PROTEIN NOP10"/>
    <property type="match status" value="1"/>
</dbReference>
<dbReference type="Pfam" id="PF04135">
    <property type="entry name" value="Nop10p"/>
    <property type="match status" value="1"/>
</dbReference>
<dbReference type="SUPFAM" id="SSF144210">
    <property type="entry name" value="Nop10-like SnoRNP"/>
    <property type="match status" value="1"/>
</dbReference>
<evidence type="ECO:0000255" key="1">
    <source>
        <dbReference type="HAMAP-Rule" id="MF_00803"/>
    </source>
</evidence>
<protein>
    <recommendedName>
        <fullName evidence="1">Ribosome biogenesis protein Nop10</fullName>
    </recommendedName>
</protein>
<reference key="1">
    <citation type="journal article" date="2007" name="Genome Biol.">
        <title>Genome analysis and genome-wide proteomics of Thermococcus gammatolerans, the most radioresistant organism known amongst the Archaea.</title>
        <authorList>
            <person name="Zivanovic Y."/>
            <person name="Armengaud J."/>
            <person name="Lagorce A."/>
            <person name="Leplat C."/>
            <person name="Guerin P."/>
            <person name="Dutertre M."/>
            <person name="Anthouard V."/>
            <person name="Forterre P."/>
            <person name="Wincker P."/>
            <person name="Confalonieri F."/>
        </authorList>
    </citation>
    <scope>NUCLEOTIDE SEQUENCE [LARGE SCALE GENOMIC DNA]</scope>
    <source>
        <strain>DSM 15229 / JCM 11827 / EJ3</strain>
    </source>
</reference>
<comment type="function">
    <text evidence="1">Involved in ribosome biogenesis; more specifically in 18S rRNA pseudouridylation and in cleavage of pre-rRNA.</text>
</comment>
<comment type="similarity">
    <text evidence="1">Belongs to the NOP10 family.</text>
</comment>
<keyword id="KW-1185">Reference proteome</keyword>
<keyword id="KW-0687">Ribonucleoprotein</keyword>
<keyword id="KW-0690">Ribosome biogenesis</keyword>
<keyword id="KW-0698">rRNA processing</keyword>
<proteinExistence type="inferred from homology"/>
<sequence length="59" mass="7079">MRFRIRKCPNCGRYTLKEICPVCGAKTKVAHPPRFSPEDPYGEYRRRWKREVLGIEVRK</sequence>
<accession>C5A500</accession>
<organism>
    <name type="scientific">Thermococcus gammatolerans (strain DSM 15229 / JCM 11827 / EJ3)</name>
    <dbReference type="NCBI Taxonomy" id="593117"/>
    <lineage>
        <taxon>Archaea</taxon>
        <taxon>Methanobacteriati</taxon>
        <taxon>Methanobacteriota</taxon>
        <taxon>Thermococci</taxon>
        <taxon>Thermococcales</taxon>
        <taxon>Thermococcaceae</taxon>
        <taxon>Thermococcus</taxon>
    </lineage>
</organism>
<feature type="chain" id="PRO_1000212997" description="Ribosome biogenesis protein Nop10">
    <location>
        <begin position="1"/>
        <end position="59"/>
    </location>
</feature>